<protein>
    <recommendedName>
        <fullName>Thioredoxin</fullName>
        <shortName>Trx</shortName>
    </recommendedName>
</protein>
<gene>
    <name type="primary">TXN</name>
</gene>
<dbReference type="EMBL" id="AF104105">
    <property type="protein sequence ID" value="AAC83380.1"/>
    <property type="molecule type" value="mRNA"/>
</dbReference>
<dbReference type="EMBL" id="BC103415">
    <property type="protein sequence ID" value="AAI03416.1"/>
    <property type="molecule type" value="mRNA"/>
</dbReference>
<dbReference type="EMBL" id="BC120457">
    <property type="protein sequence ID" value="AAI20458.1"/>
    <property type="molecule type" value="mRNA"/>
</dbReference>
<dbReference type="RefSeq" id="NP_776393.1">
    <property type="nucleotide sequence ID" value="NM_173968.3"/>
</dbReference>
<dbReference type="SMR" id="O97680"/>
<dbReference type="FunCoup" id="O97680">
    <property type="interactions" value="2293"/>
</dbReference>
<dbReference type="IntAct" id="O97680">
    <property type="interactions" value="1"/>
</dbReference>
<dbReference type="STRING" id="9913.ENSBTAP00000041860"/>
<dbReference type="PaxDb" id="9913-ENSBTAP00000041860"/>
<dbReference type="PeptideAtlas" id="O97680"/>
<dbReference type="GeneID" id="280950"/>
<dbReference type="KEGG" id="bta:280950"/>
<dbReference type="CTD" id="7295"/>
<dbReference type="VEuPathDB" id="HostDB:ENSBTAG00000002953"/>
<dbReference type="eggNOG" id="KOG0907">
    <property type="taxonomic scope" value="Eukaryota"/>
</dbReference>
<dbReference type="HOGENOM" id="CLU_090389_14_6_1"/>
<dbReference type="InParanoid" id="O97680"/>
<dbReference type="OMA" id="CYADWCS"/>
<dbReference type="OrthoDB" id="2121326at2759"/>
<dbReference type="Reactome" id="R-BTA-2559580">
    <property type="pathway name" value="Oxidative Stress Induced Senescence"/>
</dbReference>
<dbReference type="Reactome" id="R-BTA-3299685">
    <property type="pathway name" value="Detoxification of Reactive Oxygen Species"/>
</dbReference>
<dbReference type="Reactome" id="R-BTA-499943">
    <property type="pathway name" value="Interconversion of nucleotide di- and triphosphates"/>
</dbReference>
<dbReference type="Reactome" id="R-BTA-5628897">
    <property type="pathway name" value="TP53 Regulates Metabolic Genes"/>
</dbReference>
<dbReference type="Reactome" id="R-BTA-5676934">
    <property type="pathway name" value="Protein repair"/>
</dbReference>
<dbReference type="Reactome" id="R-BTA-844456">
    <property type="pathway name" value="The NLRP3 inflammasome"/>
</dbReference>
<dbReference type="Proteomes" id="UP000009136">
    <property type="component" value="Chromosome 8"/>
</dbReference>
<dbReference type="Bgee" id="ENSBTAG00000002953">
    <property type="expression patterns" value="Expressed in diaphragm and 102 other cell types or tissues"/>
</dbReference>
<dbReference type="GO" id="GO:0005737">
    <property type="term" value="C:cytoplasm"/>
    <property type="evidence" value="ECO:0007669"/>
    <property type="project" value="UniProtKB-SubCell"/>
</dbReference>
<dbReference type="GO" id="GO:0005576">
    <property type="term" value="C:extracellular region"/>
    <property type="evidence" value="ECO:0007669"/>
    <property type="project" value="UniProtKB-SubCell"/>
</dbReference>
<dbReference type="GO" id="GO:0005634">
    <property type="term" value="C:nucleus"/>
    <property type="evidence" value="ECO:0007669"/>
    <property type="project" value="UniProtKB-SubCell"/>
</dbReference>
<dbReference type="GO" id="GO:0015035">
    <property type="term" value="F:protein-disulfide reductase activity"/>
    <property type="evidence" value="ECO:0007669"/>
    <property type="project" value="InterPro"/>
</dbReference>
<dbReference type="GO" id="GO:0043388">
    <property type="term" value="P:positive regulation of DNA binding"/>
    <property type="evidence" value="ECO:0000250"/>
    <property type="project" value="UniProtKB"/>
</dbReference>
<dbReference type="GO" id="GO:0009314">
    <property type="term" value="P:response to radiation"/>
    <property type="evidence" value="ECO:0000250"/>
    <property type="project" value="UniProtKB"/>
</dbReference>
<dbReference type="CDD" id="cd02947">
    <property type="entry name" value="TRX_family"/>
    <property type="match status" value="1"/>
</dbReference>
<dbReference type="FunFam" id="3.40.30.10:FF:000130">
    <property type="entry name" value="Thioredoxin"/>
    <property type="match status" value="1"/>
</dbReference>
<dbReference type="Gene3D" id="3.40.30.10">
    <property type="entry name" value="Glutaredoxin"/>
    <property type="match status" value="1"/>
</dbReference>
<dbReference type="InterPro" id="IPR005746">
    <property type="entry name" value="Thioredoxin"/>
</dbReference>
<dbReference type="InterPro" id="IPR036249">
    <property type="entry name" value="Thioredoxin-like_sf"/>
</dbReference>
<dbReference type="InterPro" id="IPR017937">
    <property type="entry name" value="Thioredoxin_CS"/>
</dbReference>
<dbReference type="InterPro" id="IPR013766">
    <property type="entry name" value="Thioredoxin_domain"/>
</dbReference>
<dbReference type="PANTHER" id="PTHR46115">
    <property type="entry name" value="THIOREDOXIN-LIKE PROTEIN 1"/>
    <property type="match status" value="1"/>
</dbReference>
<dbReference type="Pfam" id="PF00085">
    <property type="entry name" value="Thioredoxin"/>
    <property type="match status" value="1"/>
</dbReference>
<dbReference type="PIRSF" id="PIRSF000077">
    <property type="entry name" value="Thioredoxin"/>
    <property type="match status" value="1"/>
</dbReference>
<dbReference type="PRINTS" id="PR00421">
    <property type="entry name" value="THIOREDOXIN"/>
</dbReference>
<dbReference type="SUPFAM" id="SSF52833">
    <property type="entry name" value="Thioredoxin-like"/>
    <property type="match status" value="1"/>
</dbReference>
<dbReference type="PROSITE" id="PS00194">
    <property type="entry name" value="THIOREDOXIN_1"/>
    <property type="match status" value="1"/>
</dbReference>
<dbReference type="PROSITE" id="PS51352">
    <property type="entry name" value="THIOREDOXIN_2"/>
    <property type="match status" value="1"/>
</dbReference>
<comment type="function">
    <text evidence="1">Participates in various redox reactions through the reversible oxidation of its active center dithiol to a disulfide and catalyzes dithiol-disulfide exchange reactions (By similarity). Plays a role in the reversible S-nitrosylation of cysteine residues in target proteins, and thereby contributes to the response to intracellular nitric oxide. Nitrosylates the active site Cys of CASP3 in response to nitric oxide (NO), and thereby inhibits caspase-3 activity. Induces the FOS/JUN AP-1 DNA binding activity in ionizing radiation (IR) cells through its oxidation/reduction status and stimulates AP-1 transcriptional activity (By similarity).</text>
</comment>
<comment type="subunit">
    <text evidence="1">Homodimer; disulfide-linked. Interacts with TXNIP through the redox-active site. Interacts with MAP3K5 and CASP3. Interacts with APEX1; the interaction stimulates the FOS/JUN AP-1 DNA-binding activity in a redox-dependent manner (By similarity).</text>
</comment>
<comment type="subcellular location">
    <subcellularLocation>
        <location evidence="2">Nucleus</location>
    </subcellularLocation>
    <subcellularLocation>
        <location evidence="2">Cytoplasm</location>
    </subcellularLocation>
    <subcellularLocation>
        <location evidence="2">Secreted</location>
    </subcellularLocation>
    <text evidence="2">Translocates from the cytoplasm into the nucleus after phorbol 12-myristate 13-acetate induction (PMA). Predominantly in the cytoplasm in non irradiated cells. Radiation induces translocation of TRX from the cytoplasm to the nucleus. Secreted by a leaderless secretory pathway.</text>
</comment>
<comment type="PTM">
    <text evidence="1">In the fully reduced protein, both Cys-69 and Cys-73 are nitrosylated in response to nitric oxide (NO). When two disulfide bonds are present in the protein, only Cys-73 is nitrosylated. Cys-73 can serve as donor for nitrosylation of target proteins (By similarity).</text>
</comment>
<comment type="similarity">
    <text evidence="5">Belongs to the thioredoxin family.</text>
</comment>
<evidence type="ECO:0000250" key="1"/>
<evidence type="ECO:0000250" key="2">
    <source>
        <dbReference type="UniProtKB" id="P10599"/>
    </source>
</evidence>
<evidence type="ECO:0000250" key="3">
    <source>
        <dbReference type="UniProtKB" id="P10639"/>
    </source>
</evidence>
<evidence type="ECO:0000255" key="4">
    <source>
        <dbReference type="PROSITE-ProRule" id="PRU00691"/>
    </source>
</evidence>
<evidence type="ECO:0000305" key="5"/>
<reference key="1">
    <citation type="journal article" date="1999" name="DNA Seq.">
        <title>cDNA sequence of bovine thioredoxin.</title>
        <authorList>
            <person name="Terashima H."/>
            <person name="Gotoh S."/>
            <person name="Yagi K."/>
            <person name="Mizoguchi T."/>
        </authorList>
    </citation>
    <scope>NUCLEOTIDE SEQUENCE [MRNA]</scope>
</reference>
<reference key="2">
    <citation type="submission" date="2006-08" db="EMBL/GenBank/DDBJ databases">
        <authorList>
            <consortium name="NIH - Mammalian Gene Collection (MGC) project"/>
        </authorList>
    </citation>
    <scope>NUCLEOTIDE SEQUENCE [LARGE SCALE MRNA]</scope>
    <source>
        <strain>Crossbred X Angus</strain>
        <tissue>Ileum</tissue>
        <tissue>Liver</tissue>
    </source>
</reference>
<sequence>MVKQIESKYAFQEALNSAGEKLVVVDFSATWCGPCKMIKPFFHSLSEKYSNVVFLEVDVDDCQDVAAECEVKCMPTFQFFKKGQKVGEFSGANKEKLEATINELI</sequence>
<organism>
    <name type="scientific">Bos taurus</name>
    <name type="common">Bovine</name>
    <dbReference type="NCBI Taxonomy" id="9913"/>
    <lineage>
        <taxon>Eukaryota</taxon>
        <taxon>Metazoa</taxon>
        <taxon>Chordata</taxon>
        <taxon>Craniata</taxon>
        <taxon>Vertebrata</taxon>
        <taxon>Euteleostomi</taxon>
        <taxon>Mammalia</taxon>
        <taxon>Eutheria</taxon>
        <taxon>Laurasiatheria</taxon>
        <taxon>Artiodactyla</taxon>
        <taxon>Ruminantia</taxon>
        <taxon>Pecora</taxon>
        <taxon>Bovidae</taxon>
        <taxon>Bovinae</taxon>
        <taxon>Bos</taxon>
    </lineage>
</organism>
<name>THIO_BOVIN</name>
<keyword id="KW-0007">Acetylation</keyword>
<keyword id="KW-0010">Activator</keyword>
<keyword id="KW-0963">Cytoplasm</keyword>
<keyword id="KW-1015">Disulfide bond</keyword>
<keyword id="KW-0249">Electron transport</keyword>
<keyword id="KW-0539">Nucleus</keyword>
<keyword id="KW-0676">Redox-active center</keyword>
<keyword id="KW-1185">Reference proteome</keyword>
<keyword id="KW-0702">S-nitrosylation</keyword>
<keyword id="KW-0964">Secreted</keyword>
<keyword id="KW-0804">Transcription</keyword>
<keyword id="KW-0805">Transcription regulation</keyword>
<keyword id="KW-0813">Transport</keyword>
<accession>O97680</accession>
<accession>Q0VBX7</accession>
<accession>Q3ZBD8</accession>
<feature type="chain" id="PRO_0000120001" description="Thioredoxin">
    <location>
        <begin position="1"/>
        <end position="105"/>
    </location>
</feature>
<feature type="domain" description="Thioredoxin" evidence="4">
    <location>
        <begin position="2"/>
        <end position="105"/>
    </location>
</feature>
<feature type="active site" description="Nucleophile" evidence="1">
    <location>
        <position position="32"/>
    </location>
</feature>
<feature type="active site" description="Nucleophile" evidence="1">
    <location>
        <position position="35"/>
    </location>
</feature>
<feature type="site" description="Deprotonates C-terminal active site Cys" evidence="1">
    <location>
        <position position="26"/>
    </location>
</feature>
<feature type="site" description="Contributes to redox potential value" evidence="1">
    <location>
        <position position="33"/>
    </location>
</feature>
<feature type="site" description="Contributes to redox potential value" evidence="1">
    <location>
        <position position="34"/>
    </location>
</feature>
<feature type="modified residue" description="N6-acetyllysine" evidence="2">
    <location>
        <position position="3"/>
    </location>
</feature>
<feature type="modified residue" description="N6-succinyllysine" evidence="3">
    <location>
        <position position="8"/>
    </location>
</feature>
<feature type="modified residue" description="N6-acetyllysine" evidence="2">
    <location>
        <position position="39"/>
    </location>
</feature>
<feature type="modified residue" description="S-nitrosocysteine" evidence="2">
    <location>
        <position position="62"/>
    </location>
</feature>
<feature type="modified residue" description="S-nitrosocysteine" evidence="2">
    <location>
        <position position="69"/>
    </location>
</feature>
<feature type="modified residue" description="S-nitrosocysteine; alternate" evidence="2">
    <location>
        <position position="73"/>
    </location>
</feature>
<feature type="modified residue" description="N6-acetyllysine; alternate" evidence="3">
    <location>
        <position position="94"/>
    </location>
</feature>
<feature type="modified residue" description="N6-succinyllysine; alternate" evidence="3">
    <location>
        <position position="94"/>
    </location>
</feature>
<feature type="disulfide bond" description="Redox-active" evidence="4">
    <location>
        <begin position="32"/>
        <end position="35"/>
    </location>
</feature>
<feature type="disulfide bond" description="Interchain; alternate" evidence="1">
    <location>
        <position position="73"/>
    </location>
</feature>
<proteinExistence type="inferred from homology"/>